<keyword id="KW-0997">Cell inner membrane</keyword>
<keyword id="KW-1003">Cell membrane</keyword>
<keyword id="KW-0406">Ion transport</keyword>
<keyword id="KW-0472">Membrane</keyword>
<keyword id="KW-0630">Potassium</keyword>
<keyword id="KW-0633">Potassium transport</keyword>
<keyword id="KW-1185">Reference proteome</keyword>
<keyword id="KW-0812">Transmembrane</keyword>
<keyword id="KW-1133">Transmembrane helix</keyword>
<keyword id="KW-0813">Transport</keyword>
<gene>
    <name evidence="1" type="primary">kdpA</name>
    <name type="ordered locus">CV_1599</name>
</gene>
<comment type="function">
    <text evidence="1">Part of the high-affinity ATP-driven potassium transport (or Kdp) system, which catalyzes the hydrolysis of ATP coupled with the electrogenic transport of potassium into the cytoplasm. This subunit binds the periplasmic potassium ions and delivers the ions to the membrane domain of KdpB through an intramembrane tunnel.</text>
</comment>
<comment type="subunit">
    <text evidence="1">The system is composed of three essential subunits: KdpA, KdpB and KdpC.</text>
</comment>
<comment type="subcellular location">
    <subcellularLocation>
        <location evidence="1">Cell inner membrane</location>
        <topology evidence="1">Multi-pass membrane protein</topology>
    </subcellularLocation>
</comment>
<comment type="similarity">
    <text evidence="1">Belongs to the KdpA family.</text>
</comment>
<dbReference type="EMBL" id="AE016825">
    <property type="protein sequence ID" value="AAQ59275.1"/>
    <property type="molecule type" value="Genomic_DNA"/>
</dbReference>
<dbReference type="RefSeq" id="WP_011135151.1">
    <property type="nucleotide sequence ID" value="NC_005085.1"/>
</dbReference>
<dbReference type="SMR" id="Q7NXM7"/>
<dbReference type="STRING" id="243365.CV_1599"/>
<dbReference type="KEGG" id="cvi:CV_1599"/>
<dbReference type="eggNOG" id="COG2060">
    <property type="taxonomic scope" value="Bacteria"/>
</dbReference>
<dbReference type="HOGENOM" id="CLU_018614_3_0_4"/>
<dbReference type="OrthoDB" id="9763796at2"/>
<dbReference type="Proteomes" id="UP000001424">
    <property type="component" value="Chromosome"/>
</dbReference>
<dbReference type="GO" id="GO:0005886">
    <property type="term" value="C:plasma membrane"/>
    <property type="evidence" value="ECO:0007669"/>
    <property type="project" value="UniProtKB-SubCell"/>
</dbReference>
<dbReference type="GO" id="GO:0008556">
    <property type="term" value="F:P-type potassium transmembrane transporter activity"/>
    <property type="evidence" value="ECO:0007669"/>
    <property type="project" value="InterPro"/>
</dbReference>
<dbReference type="GO" id="GO:0030955">
    <property type="term" value="F:potassium ion binding"/>
    <property type="evidence" value="ECO:0007669"/>
    <property type="project" value="UniProtKB-UniRule"/>
</dbReference>
<dbReference type="HAMAP" id="MF_00275">
    <property type="entry name" value="KdpA"/>
    <property type="match status" value="1"/>
</dbReference>
<dbReference type="InterPro" id="IPR004623">
    <property type="entry name" value="KdpA"/>
</dbReference>
<dbReference type="NCBIfam" id="TIGR00680">
    <property type="entry name" value="kdpA"/>
    <property type="match status" value="1"/>
</dbReference>
<dbReference type="PANTHER" id="PTHR30607">
    <property type="entry name" value="POTASSIUM-TRANSPORTING ATPASE A CHAIN"/>
    <property type="match status" value="1"/>
</dbReference>
<dbReference type="PANTHER" id="PTHR30607:SF2">
    <property type="entry name" value="POTASSIUM-TRANSPORTING ATPASE POTASSIUM-BINDING SUBUNIT"/>
    <property type="match status" value="1"/>
</dbReference>
<dbReference type="Pfam" id="PF03814">
    <property type="entry name" value="KdpA"/>
    <property type="match status" value="1"/>
</dbReference>
<dbReference type="PIRSF" id="PIRSF001294">
    <property type="entry name" value="K_ATPaseA"/>
    <property type="match status" value="1"/>
</dbReference>
<accession>Q7NXM7</accession>
<name>KDPA_CHRVO</name>
<reference key="1">
    <citation type="journal article" date="2003" name="Proc. Natl. Acad. Sci. U.S.A.">
        <title>The complete genome sequence of Chromobacterium violaceum reveals remarkable and exploitable bacterial adaptability.</title>
        <authorList>
            <person name="Vasconcelos A.T.R."/>
            <person name="de Almeida D.F."/>
            <person name="Hungria M."/>
            <person name="Guimaraes C.T."/>
            <person name="Antonio R.V."/>
            <person name="Almeida F.C."/>
            <person name="de Almeida L.G.P."/>
            <person name="de Almeida R."/>
            <person name="Alves-Gomes J.A."/>
            <person name="Andrade E.M."/>
            <person name="Araripe J."/>
            <person name="de Araujo M.F.F."/>
            <person name="Astolfi-Filho S."/>
            <person name="Azevedo V."/>
            <person name="Baptista A.J."/>
            <person name="Bataus L.A.M."/>
            <person name="Batista J.S."/>
            <person name="Belo A."/>
            <person name="van den Berg C."/>
            <person name="Bogo M."/>
            <person name="Bonatto S."/>
            <person name="Bordignon J."/>
            <person name="Brigido M.M."/>
            <person name="Brito C.A."/>
            <person name="Brocchi M."/>
            <person name="Burity H.A."/>
            <person name="Camargo A.A."/>
            <person name="Cardoso D.D.P."/>
            <person name="Carneiro N.P."/>
            <person name="Carraro D.M."/>
            <person name="Carvalho C.M.B."/>
            <person name="Cascardo J.C.M."/>
            <person name="Cavada B.S."/>
            <person name="Chueire L.M.O."/>
            <person name="Creczynski-Pasa T.B."/>
            <person name="Cunha-Junior N.C."/>
            <person name="Fagundes N."/>
            <person name="Falcao C.L."/>
            <person name="Fantinatti F."/>
            <person name="Farias I.P."/>
            <person name="Felipe M.S.S."/>
            <person name="Ferrari L.P."/>
            <person name="Ferro J.A."/>
            <person name="Ferro M.I.T."/>
            <person name="Franco G.R."/>
            <person name="Freitas N.S.A."/>
            <person name="Furlan L.R."/>
            <person name="Gazzinelli R.T."/>
            <person name="Gomes E.A."/>
            <person name="Goncalves P.R."/>
            <person name="Grangeiro T.B."/>
            <person name="Grattapaglia D."/>
            <person name="Grisard E.C."/>
            <person name="Hanna E.S."/>
            <person name="Jardim S.N."/>
            <person name="Laurino J."/>
            <person name="Leoi L.C.T."/>
            <person name="Lima L.F.A."/>
            <person name="Loureiro M.F."/>
            <person name="Lyra M.C.C.P."/>
            <person name="Madeira H.M.F."/>
            <person name="Manfio G.P."/>
            <person name="Maranhao A.Q."/>
            <person name="Martins W.S."/>
            <person name="di Mauro S.M.Z."/>
            <person name="de Medeiros S.R.B."/>
            <person name="Meissner R.V."/>
            <person name="Moreira M.A.M."/>
            <person name="Nascimento F.F."/>
            <person name="Nicolas M.F."/>
            <person name="Oliveira J.G."/>
            <person name="Oliveira S.C."/>
            <person name="Paixao R.F.C."/>
            <person name="Parente J.A."/>
            <person name="Pedrosa F.O."/>
            <person name="Pena S.D.J."/>
            <person name="Pereira J.O."/>
            <person name="Pereira M."/>
            <person name="Pinto L.S.R.C."/>
            <person name="Pinto L.S."/>
            <person name="Porto J.I.R."/>
            <person name="Potrich D.P."/>
            <person name="Ramalho-Neto C.E."/>
            <person name="Reis A.M.M."/>
            <person name="Rigo L.U."/>
            <person name="Rondinelli E."/>
            <person name="Santos E.B.P."/>
            <person name="Santos F.R."/>
            <person name="Schneider M.P.C."/>
            <person name="Seuanez H.N."/>
            <person name="Silva A.M.R."/>
            <person name="da Silva A.L.C."/>
            <person name="Silva D.W."/>
            <person name="Silva R."/>
            <person name="Simoes I.C."/>
            <person name="Simon D."/>
            <person name="Soares C.M.A."/>
            <person name="Soares R.B.A."/>
            <person name="Souza E.M."/>
            <person name="Souza K.R.L."/>
            <person name="Souza R.C."/>
            <person name="Steffens M.B.R."/>
            <person name="Steindel M."/>
            <person name="Teixeira S.R."/>
            <person name="Urmenyi T."/>
            <person name="Vettore A."/>
            <person name="Wassem R."/>
            <person name="Zaha A."/>
            <person name="Simpson A.J.G."/>
        </authorList>
    </citation>
    <scope>NUCLEOTIDE SEQUENCE [LARGE SCALE GENOMIC DNA]</scope>
    <source>
        <strain>ATCC 12472 / DSM 30191 / JCM 1249 / CCUG 213 / NBRC 12614 / NCIMB 9131 / NCTC 9757 / MK</strain>
    </source>
</reference>
<organism>
    <name type="scientific">Chromobacterium violaceum (strain ATCC 12472 / DSM 30191 / JCM 1249 / CCUG 213 / NBRC 12614 / NCIMB 9131 / NCTC 9757 / MK)</name>
    <dbReference type="NCBI Taxonomy" id="243365"/>
    <lineage>
        <taxon>Bacteria</taxon>
        <taxon>Pseudomonadati</taxon>
        <taxon>Pseudomonadota</taxon>
        <taxon>Betaproteobacteria</taxon>
        <taxon>Neisseriales</taxon>
        <taxon>Chromobacteriaceae</taxon>
        <taxon>Chromobacterium</taxon>
    </lineage>
</organism>
<proteinExistence type="inferred from homology"/>
<protein>
    <recommendedName>
        <fullName evidence="1">Potassium-transporting ATPase potassium-binding subunit</fullName>
    </recommendedName>
    <alternativeName>
        <fullName evidence="1">ATP phosphohydrolase [potassium-transporting] A chain</fullName>
    </alternativeName>
    <alternativeName>
        <fullName evidence="1">Potassium-binding and translocating subunit A</fullName>
    </alternativeName>
    <alternativeName>
        <fullName evidence="1">Potassium-translocating ATPase A chain</fullName>
    </alternativeName>
</protein>
<sequence length="602" mass="63868">MSTPAMLQLGLFLVVLIALAWPLGAYMTRVMQGENIGPARWCAPLERGFYRLAGIKQEEEMGWRGYAVALILFNVLGVAAVYALQRLQGMLPFNPQAMAAVSPDSSFNTAISFVTNTNWQGYGGETTMSYLTQMLGLTVQNFVSAATGAAVVIALIRGFARHSSAKIGNFWVDVTRMTLYVLLPLAVVFALVFTQQGAIQNLSAYQDVHTVETVKYQQPKQDAKGNPVLGKDGKPVMEDKTSQTQTLPMGPVASQEAIKMLGTNGGGFFNANSAHPFENPTPLANFLQDIAIFLIPAALCFLFGRMVGDRRQGWAILAAMTIMFATAVVVETRAEQAGVPQYSSLGIDQRASQLQSGGNMEGKEARFGIIDTSLFVAVTTSASCGAVNAMHDSLTPIGGLVPMFLMQLGEVVFGGVGSGLYGMLIFAILAVFIAGLMVGRTPEYLGKKIETYEMKMTAITILVTPTLVLALTAIAVSLAAGKAGIANPAAHGFSEILYAFTSAANNNGSAFAGLSANTPFYNIMTGLAMFFGRFFMIVPILAIAGSLAAKKRLAVTGGTLPTHGPLFVTLLIGTVLLVGALNYVPALALGPVVEHLQMLAAR</sequence>
<evidence type="ECO:0000255" key="1">
    <source>
        <dbReference type="HAMAP-Rule" id="MF_00275"/>
    </source>
</evidence>
<evidence type="ECO:0000256" key="2">
    <source>
        <dbReference type="SAM" id="MobiDB-lite"/>
    </source>
</evidence>
<feature type="chain" id="PRO_0000166490" description="Potassium-transporting ATPase potassium-binding subunit">
    <location>
        <begin position="1"/>
        <end position="602"/>
    </location>
</feature>
<feature type="transmembrane region" description="Helical" evidence="1">
    <location>
        <begin position="5"/>
        <end position="25"/>
    </location>
</feature>
<feature type="transmembrane region" description="Helical" evidence="1">
    <location>
        <begin position="65"/>
        <end position="85"/>
    </location>
</feature>
<feature type="transmembrane region" description="Helical" evidence="1">
    <location>
        <begin position="136"/>
        <end position="156"/>
    </location>
</feature>
<feature type="transmembrane region" description="Helical" evidence="1">
    <location>
        <begin position="179"/>
        <end position="199"/>
    </location>
</feature>
<feature type="transmembrane region" description="Helical" evidence="1">
    <location>
        <begin position="283"/>
        <end position="303"/>
    </location>
</feature>
<feature type="transmembrane region" description="Helical" evidence="1">
    <location>
        <begin position="312"/>
        <end position="332"/>
    </location>
</feature>
<feature type="transmembrane region" description="Helical" evidence="1">
    <location>
        <begin position="419"/>
        <end position="439"/>
    </location>
</feature>
<feature type="transmembrane region" description="Helical" evidence="1">
    <location>
        <begin position="458"/>
        <end position="478"/>
    </location>
</feature>
<feature type="transmembrane region" description="Helical" evidence="1">
    <location>
        <begin position="523"/>
        <end position="543"/>
    </location>
</feature>
<feature type="transmembrane region" description="Helical" evidence="1">
    <location>
        <begin position="566"/>
        <end position="586"/>
    </location>
</feature>
<feature type="region of interest" description="Disordered" evidence="2">
    <location>
        <begin position="221"/>
        <end position="248"/>
    </location>
</feature>
<feature type="compositionally biased region" description="Basic and acidic residues" evidence="2">
    <location>
        <begin position="231"/>
        <end position="241"/>
    </location>
</feature>